<protein>
    <recommendedName>
        <fullName>Virion membrane protein OPG141</fullName>
    </recommendedName>
</protein>
<keyword id="KW-0067">ATP-binding</keyword>
<keyword id="KW-0238">DNA-binding</keyword>
<keyword id="KW-0347">Helicase</keyword>
<keyword id="KW-0378">Hydrolase</keyword>
<keyword id="KW-0426">Late protein</keyword>
<keyword id="KW-0472">Membrane</keyword>
<keyword id="KW-0547">Nucleotide-binding</keyword>
<keyword id="KW-0597">Phosphoprotein</keyword>
<keyword id="KW-1185">Reference proteome</keyword>
<keyword id="KW-0804">Transcription</keyword>
<keyword id="KW-0805">Transcription regulation</keyword>
<keyword id="KW-0806">Transcription termination</keyword>
<keyword id="KW-0812">Transmembrane</keyword>
<keyword id="KW-1133">Transmembrane helix</keyword>
<keyword id="KW-0261">Viral envelope protein</keyword>
<keyword id="KW-0946">Virion</keyword>
<gene>
    <name type="primary">OPG141</name>
    <name type="ordered locus">VACWR134</name>
    <name type="ORF">A 14.5L</name>
</gene>
<dbReference type="EMBL" id="AY243312">
    <property type="protein sequence ID" value="AAO89413.1"/>
    <property type="molecule type" value="Genomic_DNA"/>
</dbReference>
<dbReference type="SMR" id="Q80HV6"/>
<dbReference type="DNASU" id="3707532"/>
<dbReference type="KEGG" id="vg:3707532"/>
<dbReference type="Proteomes" id="UP000000344">
    <property type="component" value="Genome"/>
</dbReference>
<dbReference type="GO" id="GO:0016020">
    <property type="term" value="C:membrane"/>
    <property type="evidence" value="ECO:0007669"/>
    <property type="project" value="UniProtKB-KW"/>
</dbReference>
<dbReference type="GO" id="GO:0019031">
    <property type="term" value="C:viral envelope"/>
    <property type="evidence" value="ECO:0007669"/>
    <property type="project" value="UniProtKB-KW"/>
</dbReference>
<dbReference type="GO" id="GO:0055036">
    <property type="term" value="C:virion membrane"/>
    <property type="evidence" value="ECO:0007669"/>
    <property type="project" value="UniProtKB-SubCell"/>
</dbReference>
<dbReference type="GO" id="GO:0005524">
    <property type="term" value="F:ATP binding"/>
    <property type="evidence" value="ECO:0007669"/>
    <property type="project" value="UniProtKB-KW"/>
</dbReference>
<dbReference type="GO" id="GO:0003677">
    <property type="term" value="F:DNA binding"/>
    <property type="evidence" value="ECO:0007669"/>
    <property type="project" value="UniProtKB-KW"/>
</dbReference>
<dbReference type="GO" id="GO:0004386">
    <property type="term" value="F:helicase activity"/>
    <property type="evidence" value="ECO:0007669"/>
    <property type="project" value="UniProtKB-KW"/>
</dbReference>
<dbReference type="GO" id="GO:0016787">
    <property type="term" value="F:hydrolase activity"/>
    <property type="evidence" value="ECO:0007669"/>
    <property type="project" value="UniProtKB-KW"/>
</dbReference>
<dbReference type="GO" id="GO:0006353">
    <property type="term" value="P:DNA-templated transcription termination"/>
    <property type="evidence" value="ECO:0007669"/>
    <property type="project" value="UniProtKB-KW"/>
</dbReference>
<dbReference type="InterPro" id="IPR009372">
    <property type="entry name" value="Poxvirus_A14.5"/>
</dbReference>
<dbReference type="Pfam" id="PF06269">
    <property type="entry name" value="DUF1029"/>
    <property type="match status" value="1"/>
</dbReference>
<evidence type="ECO:0000255" key="1"/>
<evidence type="ECO:0000269" key="2">
    <source>
    </source>
</evidence>
<evidence type="ECO:0000305" key="3"/>
<proteinExistence type="evidence at protein level"/>
<reference key="1">
    <citation type="submission" date="2003-02" db="EMBL/GenBank/DDBJ databases">
        <title>Sequencing of the coding region of Vaccinia-WR to an average 9-fold redundancy and an error rate of 0.16/10kb.</title>
        <authorList>
            <person name="Esposito J.J."/>
            <person name="Frace A.M."/>
            <person name="Sammons S.A."/>
            <person name="Olsen-Rasmussen M."/>
            <person name="Osborne J."/>
            <person name="Wohlhueter R."/>
        </authorList>
    </citation>
    <scope>NUCLEOTIDE SEQUENCE [LARGE SCALE GENOMIC DNA]</scope>
</reference>
<reference key="2">
    <citation type="journal article" date="2000" name="J. Virol.">
        <title>The vaccinia virus A14.5L gene encodes a hydrophobic 53-amino-acid virion membrane protein that enhances virulence in mice and is conserved among vertebrate poxviruses.</title>
        <authorList>
            <person name="Betakova T."/>
            <person name="Wolffe E.J."/>
            <person name="Moss B."/>
        </authorList>
    </citation>
    <scope>FUNCTION</scope>
    <scope>INDUCTION</scope>
    <scope>SUBCELLULAR LOCATION</scope>
    <scope>ABSENCE OF PHOSPHORYLATION</scope>
</reference>
<name>PG141_VACCW</name>
<comment type="function">
    <text evidence="2">Protein probably involved in counteracting host defense, since it enhances virulence in vivo.</text>
</comment>
<comment type="subcellular location">
    <subcellularLocation>
        <location evidence="3">Virion membrane</location>
        <topology evidence="3">Multi-pass membrane protein</topology>
    </subcellularLocation>
    <text evidence="2">Component of the mature virion (MV) membrane.</text>
</comment>
<comment type="induction">
    <text evidence="2">Expressed in the late phase of the viral replicative cycle.</text>
</comment>
<comment type="PTM">
    <text>Not phosphorylated.</text>
</comment>
<comment type="similarity">
    <text evidence="3">Belongs to the orthopoxvirus OPG141 protein family.</text>
</comment>
<organism>
    <name type="scientific">Vaccinia virus (strain Western Reserve)</name>
    <name type="common">VACV</name>
    <name type="synonym">Vaccinia virus (strain WR)</name>
    <dbReference type="NCBI Taxonomy" id="10254"/>
    <lineage>
        <taxon>Viruses</taxon>
        <taxon>Varidnaviria</taxon>
        <taxon>Bamfordvirae</taxon>
        <taxon>Nucleocytoviricota</taxon>
        <taxon>Pokkesviricetes</taxon>
        <taxon>Chitovirales</taxon>
        <taxon>Poxviridae</taxon>
        <taxon>Chordopoxvirinae</taxon>
        <taxon>Orthopoxvirus</taxon>
        <taxon>Vaccinia virus</taxon>
    </lineage>
</organism>
<sequence length="53" mass="6165">MISNYEPLLLLVITCCVLLFNFTISSKTKIDIIFAVQTIVFIWFIFHFVHSAI</sequence>
<organismHost>
    <name type="scientific">Bos taurus</name>
    <name type="common">Bovine</name>
    <dbReference type="NCBI Taxonomy" id="9913"/>
</organismHost>
<accession>Q80HV6</accession>
<feature type="chain" id="PRO_0000414116" description="Virion membrane protein OPG141">
    <location>
        <begin position="1"/>
        <end position="53"/>
    </location>
</feature>
<feature type="topological domain" description="Intravirion" evidence="1">
    <location>
        <begin position="1"/>
        <end position="4"/>
    </location>
</feature>
<feature type="transmembrane region" description="Helical" evidence="1">
    <location>
        <begin position="5"/>
        <end position="25"/>
    </location>
</feature>
<feature type="topological domain" description="Virion surface" evidence="1">
    <location>
        <begin position="26"/>
        <end position="29"/>
    </location>
</feature>
<feature type="transmembrane region" description="Helical" evidence="1">
    <location>
        <begin position="30"/>
        <end position="50"/>
    </location>
</feature>
<feature type="topological domain" description="Intravirion" evidence="1">
    <location>
        <begin position="51"/>
        <end position="53"/>
    </location>
</feature>